<keyword id="KW-0067">ATP-binding</keyword>
<keyword id="KW-0547">Nucleotide-binding</keyword>
<keyword id="KW-0808">Transferase</keyword>
<dbReference type="EC" id="2.7.4.23" evidence="1"/>
<dbReference type="EMBL" id="CP001074">
    <property type="protein sequence ID" value="ACE89194.1"/>
    <property type="molecule type" value="Genomic_DNA"/>
</dbReference>
<dbReference type="KEGG" id="rec:RHECIAT_CH0000198"/>
<dbReference type="eggNOG" id="COG3709">
    <property type="taxonomic scope" value="Bacteria"/>
</dbReference>
<dbReference type="HOGENOM" id="CLU_102477_0_0_5"/>
<dbReference type="UniPathway" id="UPA00087">
    <property type="reaction ID" value="UER00175"/>
</dbReference>
<dbReference type="Proteomes" id="UP000008817">
    <property type="component" value="Chromosome"/>
</dbReference>
<dbReference type="GO" id="GO:0005829">
    <property type="term" value="C:cytosol"/>
    <property type="evidence" value="ECO:0007669"/>
    <property type="project" value="TreeGrafter"/>
</dbReference>
<dbReference type="GO" id="GO:0005524">
    <property type="term" value="F:ATP binding"/>
    <property type="evidence" value="ECO:0007669"/>
    <property type="project" value="UniProtKB-KW"/>
</dbReference>
<dbReference type="GO" id="GO:0033863">
    <property type="term" value="F:ribose 1,5-bisphosphate phosphokinase activity"/>
    <property type="evidence" value="ECO:0007669"/>
    <property type="project" value="UniProtKB-UniRule"/>
</dbReference>
<dbReference type="GO" id="GO:0006015">
    <property type="term" value="P:5-phosphoribose 1-diphosphate biosynthetic process"/>
    <property type="evidence" value="ECO:0007669"/>
    <property type="project" value="UniProtKB-UniRule"/>
</dbReference>
<dbReference type="GO" id="GO:0019634">
    <property type="term" value="P:organic phosphonate metabolic process"/>
    <property type="evidence" value="ECO:0007669"/>
    <property type="project" value="UniProtKB-UniRule"/>
</dbReference>
<dbReference type="Gene3D" id="3.40.50.300">
    <property type="entry name" value="P-loop containing nucleotide triphosphate hydrolases"/>
    <property type="match status" value="1"/>
</dbReference>
<dbReference type="HAMAP" id="MF_00836">
    <property type="entry name" value="PhnN"/>
    <property type="match status" value="1"/>
</dbReference>
<dbReference type="InterPro" id="IPR008145">
    <property type="entry name" value="GK/Ca_channel_bsu"/>
</dbReference>
<dbReference type="InterPro" id="IPR008144">
    <property type="entry name" value="Guanylate_kin-like_dom"/>
</dbReference>
<dbReference type="InterPro" id="IPR027417">
    <property type="entry name" value="P-loop_NTPase"/>
</dbReference>
<dbReference type="InterPro" id="IPR012699">
    <property type="entry name" value="PhnN"/>
</dbReference>
<dbReference type="NCBIfam" id="TIGR02322">
    <property type="entry name" value="phosphon_PhnN"/>
    <property type="match status" value="1"/>
</dbReference>
<dbReference type="PANTHER" id="PTHR23117">
    <property type="entry name" value="GUANYLATE KINASE-RELATED"/>
    <property type="match status" value="1"/>
</dbReference>
<dbReference type="PANTHER" id="PTHR23117:SF8">
    <property type="entry name" value="RIBOSE 1,5-BISPHOSPHATE PHOSPHOKINASE PHNN"/>
    <property type="match status" value="1"/>
</dbReference>
<dbReference type="Pfam" id="PF00625">
    <property type="entry name" value="Guanylate_kin"/>
    <property type="match status" value="1"/>
</dbReference>
<dbReference type="SMART" id="SM00072">
    <property type="entry name" value="GuKc"/>
    <property type="match status" value="1"/>
</dbReference>
<dbReference type="SUPFAM" id="SSF52540">
    <property type="entry name" value="P-loop containing nucleoside triphosphate hydrolases"/>
    <property type="match status" value="1"/>
</dbReference>
<dbReference type="PROSITE" id="PS50052">
    <property type="entry name" value="GUANYLATE_KINASE_2"/>
    <property type="match status" value="1"/>
</dbReference>
<gene>
    <name evidence="1" type="primary">phnN</name>
    <name type="ordered locus">RHECIAT_CH0000198</name>
</gene>
<name>PHNN_RHIE6</name>
<reference key="1">
    <citation type="journal article" date="2010" name="Appl. Environ. Microbiol.">
        <title>Conserved symbiotic plasmid DNA sequences in the multireplicon pangenomic structure of Rhizobium etli.</title>
        <authorList>
            <person name="Gonzalez V."/>
            <person name="Acosta J.L."/>
            <person name="Santamaria R.I."/>
            <person name="Bustos P."/>
            <person name="Fernandez J.L."/>
            <person name="Hernandez Gonzalez I.L."/>
            <person name="Diaz R."/>
            <person name="Flores M."/>
            <person name="Palacios R."/>
            <person name="Mora J."/>
            <person name="Davila G."/>
        </authorList>
    </citation>
    <scope>NUCLEOTIDE SEQUENCE [LARGE SCALE GENOMIC DNA]</scope>
    <source>
        <strain>CIAT 652</strain>
    </source>
</reference>
<protein>
    <recommendedName>
        <fullName evidence="1">Ribose 1,5-bisphosphate phosphokinase PhnN</fullName>
        <ecNumber evidence="1">2.7.4.23</ecNumber>
    </recommendedName>
    <alternativeName>
        <fullName evidence="1">Ribose 1,5-bisphosphokinase</fullName>
    </alternativeName>
</protein>
<feature type="chain" id="PRO_0000412797" description="Ribose 1,5-bisphosphate phosphokinase PhnN">
    <location>
        <begin position="1"/>
        <end position="197"/>
    </location>
</feature>
<feature type="binding site" evidence="1">
    <location>
        <begin position="21"/>
        <end position="28"/>
    </location>
    <ligand>
        <name>ATP</name>
        <dbReference type="ChEBI" id="CHEBI:30616"/>
    </ligand>
</feature>
<sequence>MTHEPHPGAGAERGIMVVVVGPSGAGKDTLMNLAARHFSGRADVHFTRRVITRHRGAGGEDHLSVSLQGFAAMEQSGSFAVWWEAHGLKYGIPAEVSVALSKGHIVVANGSRSALHRFQAAFPRLKVINVTASAEVLAGRLEARGRETHEDIMARLARGPLTVRGDYDVTELDNSGSIEEAEQKMIAILDGLLAEVH</sequence>
<comment type="function">
    <text evidence="1">Catalyzes the phosphorylation of ribose 1,5-bisphosphate to 5-phospho-D-ribosyl alpha-1-diphosphate (PRPP).</text>
</comment>
<comment type="catalytic activity">
    <reaction evidence="1">
        <text>alpha-D-ribose 1,5-bisphosphate + ATP = 5-phospho-alpha-D-ribose 1-diphosphate + ADP</text>
        <dbReference type="Rhea" id="RHEA:20109"/>
        <dbReference type="ChEBI" id="CHEBI:30616"/>
        <dbReference type="ChEBI" id="CHEBI:58017"/>
        <dbReference type="ChEBI" id="CHEBI:68688"/>
        <dbReference type="ChEBI" id="CHEBI:456216"/>
        <dbReference type="EC" id="2.7.4.23"/>
    </reaction>
</comment>
<comment type="pathway">
    <text evidence="1">Metabolic intermediate biosynthesis; 5-phospho-alpha-D-ribose 1-diphosphate biosynthesis; 5-phospho-alpha-D-ribose 1-diphosphate from D-ribose 5-phosphate (route II): step 3/3.</text>
</comment>
<comment type="similarity">
    <text evidence="1">Belongs to the ribose 1,5-bisphosphokinase family.</text>
</comment>
<evidence type="ECO:0000255" key="1">
    <source>
        <dbReference type="HAMAP-Rule" id="MF_00836"/>
    </source>
</evidence>
<proteinExistence type="inferred from homology"/>
<accession>B3PXI8</accession>
<organism>
    <name type="scientific">Rhizobium etli (strain CIAT 652)</name>
    <dbReference type="NCBI Taxonomy" id="491916"/>
    <lineage>
        <taxon>Bacteria</taxon>
        <taxon>Pseudomonadati</taxon>
        <taxon>Pseudomonadota</taxon>
        <taxon>Alphaproteobacteria</taxon>
        <taxon>Hyphomicrobiales</taxon>
        <taxon>Rhizobiaceae</taxon>
        <taxon>Rhizobium/Agrobacterium group</taxon>
        <taxon>Rhizobium</taxon>
    </lineage>
</organism>